<name>MTND_TRIV2</name>
<feature type="chain" id="PRO_0000359171" description="Acireductone dioxygenase">
    <location>
        <begin position="1"/>
        <end position="182"/>
    </location>
</feature>
<feature type="binding site" evidence="1">
    <location>
        <position position="100"/>
    </location>
    <ligand>
        <name>Fe(2+)</name>
        <dbReference type="ChEBI" id="CHEBI:29033"/>
    </ligand>
</feature>
<feature type="binding site" evidence="1">
    <location>
        <position position="100"/>
    </location>
    <ligand>
        <name>Ni(2+)</name>
        <dbReference type="ChEBI" id="CHEBI:49786"/>
    </ligand>
</feature>
<feature type="binding site" evidence="1">
    <location>
        <position position="102"/>
    </location>
    <ligand>
        <name>Fe(2+)</name>
        <dbReference type="ChEBI" id="CHEBI:29033"/>
    </ligand>
</feature>
<feature type="binding site" evidence="1">
    <location>
        <position position="102"/>
    </location>
    <ligand>
        <name>Ni(2+)</name>
        <dbReference type="ChEBI" id="CHEBI:49786"/>
    </ligand>
</feature>
<feature type="binding site" evidence="1">
    <location>
        <position position="106"/>
    </location>
    <ligand>
        <name>Fe(2+)</name>
        <dbReference type="ChEBI" id="CHEBI:29033"/>
    </ligand>
</feature>
<feature type="binding site" evidence="1">
    <location>
        <position position="106"/>
    </location>
    <ligand>
        <name>Ni(2+)</name>
        <dbReference type="ChEBI" id="CHEBI:49786"/>
    </ligand>
</feature>
<feature type="binding site" evidence="1">
    <location>
        <position position="145"/>
    </location>
    <ligand>
        <name>Fe(2+)</name>
        <dbReference type="ChEBI" id="CHEBI:29033"/>
    </ligand>
</feature>
<feature type="binding site" evidence="1">
    <location>
        <position position="145"/>
    </location>
    <ligand>
        <name>Ni(2+)</name>
        <dbReference type="ChEBI" id="CHEBI:49786"/>
    </ligand>
</feature>
<proteinExistence type="inferred from homology"/>
<evidence type="ECO:0000255" key="1">
    <source>
        <dbReference type="HAMAP-Rule" id="MF_01682"/>
    </source>
</evidence>
<organism>
    <name type="scientific">Trichormus variabilis (strain ATCC 29413 / PCC 7937)</name>
    <name type="common">Anabaena variabilis</name>
    <dbReference type="NCBI Taxonomy" id="240292"/>
    <lineage>
        <taxon>Bacteria</taxon>
        <taxon>Bacillati</taxon>
        <taxon>Cyanobacteriota</taxon>
        <taxon>Cyanophyceae</taxon>
        <taxon>Nostocales</taxon>
        <taxon>Nostocaceae</taxon>
        <taxon>Trichormus</taxon>
    </lineage>
</organism>
<keyword id="KW-0028">Amino-acid biosynthesis</keyword>
<keyword id="KW-0223">Dioxygenase</keyword>
<keyword id="KW-0408">Iron</keyword>
<keyword id="KW-0479">Metal-binding</keyword>
<keyword id="KW-0486">Methionine biosynthesis</keyword>
<keyword id="KW-0533">Nickel</keyword>
<keyword id="KW-0560">Oxidoreductase</keyword>
<sequence length="182" mass="20362">MATLLLEDGTIESNLDEIARELAPLGVYIKHYDPGTSILFPHLLIQDALTDKEKCHIVDLHNSVFEFIQQENGYLWCDLLNVHPGSPNLQTLIATYAKYHTHTAPEALYVLAGEMIFGFVKPDGSQVQLLVQSQDYLHIPSGVEHWCSLTASLSFKAVRYFTAADGWVPNYTGTQLNDSLNK</sequence>
<gene>
    <name evidence="1" type="primary">mtnD</name>
    <name type="ordered locus">Ava_4291</name>
</gene>
<reference key="1">
    <citation type="journal article" date="2014" name="Stand. Genomic Sci.">
        <title>Complete genome sequence of Anabaena variabilis ATCC 29413.</title>
        <authorList>
            <person name="Thiel T."/>
            <person name="Pratte B.S."/>
            <person name="Zhong J."/>
            <person name="Goodwin L."/>
            <person name="Copeland A."/>
            <person name="Lucas S."/>
            <person name="Han C."/>
            <person name="Pitluck S."/>
            <person name="Land M.L."/>
            <person name="Kyrpides N.C."/>
            <person name="Woyke T."/>
        </authorList>
    </citation>
    <scope>NUCLEOTIDE SEQUENCE [LARGE SCALE GENOMIC DNA]</scope>
    <source>
        <strain>ATCC 29413 / PCC 7937</strain>
    </source>
</reference>
<protein>
    <recommendedName>
        <fullName evidence="1">Acireductone dioxygenase</fullName>
    </recommendedName>
    <alternativeName>
        <fullName evidence="1">1,2-dihydroxy-3-keto-5-methylthiopentene dioxygenase</fullName>
        <shortName evidence="1">DHK-MTPene dioxygenase</shortName>
    </alternativeName>
    <alternativeName>
        <fullName evidence="1">Acireductone dioxygenase (Fe(2+)-requiring)</fullName>
        <shortName evidence="1">ARD'</shortName>
        <shortName evidence="1">Fe-ARD</shortName>
        <ecNumber evidence="1">1.13.11.54</ecNumber>
    </alternativeName>
    <alternativeName>
        <fullName evidence="1">Acireductone dioxygenase (Ni(2+)-requiring)</fullName>
        <shortName evidence="1">ARD</shortName>
        <shortName evidence="1">Ni-ARD</shortName>
        <ecNumber evidence="1">1.13.11.53</ecNumber>
    </alternativeName>
</protein>
<dbReference type="EC" id="1.13.11.54" evidence="1"/>
<dbReference type="EC" id="1.13.11.53" evidence="1"/>
<dbReference type="EMBL" id="CP000117">
    <property type="protein sequence ID" value="ABA23890.1"/>
    <property type="molecule type" value="Genomic_DNA"/>
</dbReference>
<dbReference type="SMR" id="Q3M546"/>
<dbReference type="STRING" id="240292.Ava_4291"/>
<dbReference type="DNASU" id="3680842"/>
<dbReference type="KEGG" id="ava:Ava_4291"/>
<dbReference type="eggNOG" id="COG1791">
    <property type="taxonomic scope" value="Bacteria"/>
</dbReference>
<dbReference type="HOGENOM" id="CLU_125400_0_0_3"/>
<dbReference type="UniPathway" id="UPA00904">
    <property type="reaction ID" value="UER00878"/>
</dbReference>
<dbReference type="Proteomes" id="UP000002533">
    <property type="component" value="Chromosome"/>
</dbReference>
<dbReference type="GO" id="GO:0010308">
    <property type="term" value="F:acireductone dioxygenase (Ni2+-requiring) activity"/>
    <property type="evidence" value="ECO:0007669"/>
    <property type="project" value="UniProtKB-UniRule"/>
</dbReference>
<dbReference type="GO" id="GO:0010309">
    <property type="term" value="F:acireductone dioxygenase [iron(II)-requiring] activity"/>
    <property type="evidence" value="ECO:0007669"/>
    <property type="project" value="UniProtKB-UniRule"/>
</dbReference>
<dbReference type="GO" id="GO:0005506">
    <property type="term" value="F:iron ion binding"/>
    <property type="evidence" value="ECO:0007669"/>
    <property type="project" value="UniProtKB-UniRule"/>
</dbReference>
<dbReference type="GO" id="GO:0016151">
    <property type="term" value="F:nickel cation binding"/>
    <property type="evidence" value="ECO:0007669"/>
    <property type="project" value="UniProtKB-UniRule"/>
</dbReference>
<dbReference type="GO" id="GO:0019509">
    <property type="term" value="P:L-methionine salvage from methylthioadenosine"/>
    <property type="evidence" value="ECO:0007669"/>
    <property type="project" value="UniProtKB-UniRule"/>
</dbReference>
<dbReference type="GO" id="GO:0019284">
    <property type="term" value="P:L-methionine salvage from S-adenosylmethionine"/>
    <property type="evidence" value="ECO:0007669"/>
    <property type="project" value="InterPro"/>
</dbReference>
<dbReference type="CDD" id="cd02232">
    <property type="entry name" value="cupin_ARD"/>
    <property type="match status" value="1"/>
</dbReference>
<dbReference type="Gene3D" id="2.60.120.10">
    <property type="entry name" value="Jelly Rolls"/>
    <property type="match status" value="1"/>
</dbReference>
<dbReference type="HAMAP" id="MF_01682">
    <property type="entry name" value="Salvage_MtnD"/>
    <property type="match status" value="1"/>
</dbReference>
<dbReference type="InterPro" id="IPR004313">
    <property type="entry name" value="ARD"/>
</dbReference>
<dbReference type="InterPro" id="IPR023956">
    <property type="entry name" value="ARD_bac"/>
</dbReference>
<dbReference type="InterPro" id="IPR014710">
    <property type="entry name" value="RmlC-like_jellyroll"/>
</dbReference>
<dbReference type="InterPro" id="IPR011051">
    <property type="entry name" value="RmlC_Cupin_sf"/>
</dbReference>
<dbReference type="PANTHER" id="PTHR23418">
    <property type="entry name" value="ACIREDUCTONE DIOXYGENASE"/>
    <property type="match status" value="1"/>
</dbReference>
<dbReference type="PANTHER" id="PTHR23418:SF0">
    <property type="entry name" value="ACIREDUCTONE DIOXYGENASE"/>
    <property type="match status" value="1"/>
</dbReference>
<dbReference type="Pfam" id="PF03079">
    <property type="entry name" value="ARD"/>
    <property type="match status" value="1"/>
</dbReference>
<dbReference type="SUPFAM" id="SSF51182">
    <property type="entry name" value="RmlC-like cupins"/>
    <property type="match status" value="1"/>
</dbReference>
<comment type="function">
    <text evidence="1">Catalyzes 2 different reactions between oxygen and the acireductone 1,2-dihydroxy-3-keto-5-methylthiopentene (DHK-MTPene) depending upon the metal bound in the active site. Fe-containing acireductone dioxygenase (Fe-ARD) produces formate and 2-keto-4-methylthiobutyrate (KMTB), the alpha-ketoacid precursor of methionine in the methionine recycle pathway. Ni-containing acireductone dioxygenase (Ni-ARD) produces methylthiopropionate, carbon monoxide and formate, and does not lie on the methionine recycle pathway.</text>
</comment>
<comment type="catalytic activity">
    <reaction evidence="1">
        <text>1,2-dihydroxy-5-(methylsulfanyl)pent-1-en-3-one + O2 = 3-(methylsulfanyl)propanoate + CO + formate + 2 H(+)</text>
        <dbReference type="Rhea" id="RHEA:14161"/>
        <dbReference type="ChEBI" id="CHEBI:15378"/>
        <dbReference type="ChEBI" id="CHEBI:15379"/>
        <dbReference type="ChEBI" id="CHEBI:15740"/>
        <dbReference type="ChEBI" id="CHEBI:17245"/>
        <dbReference type="ChEBI" id="CHEBI:49016"/>
        <dbReference type="ChEBI" id="CHEBI:49252"/>
        <dbReference type="EC" id="1.13.11.53"/>
    </reaction>
</comment>
<comment type="catalytic activity">
    <reaction evidence="1">
        <text>1,2-dihydroxy-5-(methylsulfanyl)pent-1-en-3-one + O2 = 4-methylsulfanyl-2-oxobutanoate + formate + 2 H(+)</text>
        <dbReference type="Rhea" id="RHEA:24504"/>
        <dbReference type="ChEBI" id="CHEBI:15378"/>
        <dbReference type="ChEBI" id="CHEBI:15379"/>
        <dbReference type="ChEBI" id="CHEBI:15740"/>
        <dbReference type="ChEBI" id="CHEBI:16723"/>
        <dbReference type="ChEBI" id="CHEBI:49252"/>
        <dbReference type="EC" id="1.13.11.54"/>
    </reaction>
</comment>
<comment type="cofactor">
    <cofactor evidence="1">
        <name>Fe(2+)</name>
        <dbReference type="ChEBI" id="CHEBI:29033"/>
    </cofactor>
    <text evidence="1">Binds 1 Fe(2+) cation per monomer.</text>
</comment>
<comment type="cofactor">
    <cofactor evidence="1">
        <name>Ni(2+)</name>
        <dbReference type="ChEBI" id="CHEBI:49786"/>
    </cofactor>
    <text evidence="1">Binds 1 nickel ion per monomer.</text>
</comment>
<comment type="pathway">
    <text evidence="1">Amino-acid biosynthesis; L-methionine biosynthesis via salvage pathway; L-methionine from S-methyl-5-thio-alpha-D-ribose 1-phosphate: step 5/6.</text>
</comment>
<comment type="subunit">
    <text evidence="1">Monomer.</text>
</comment>
<comment type="similarity">
    <text evidence="1">Belongs to the acireductone dioxygenase (ARD) family.</text>
</comment>
<accession>Q3M546</accession>